<organism>
    <name type="scientific">Arabidopsis thaliana</name>
    <name type="common">Mouse-ear cress</name>
    <dbReference type="NCBI Taxonomy" id="3702"/>
    <lineage>
        <taxon>Eukaryota</taxon>
        <taxon>Viridiplantae</taxon>
        <taxon>Streptophyta</taxon>
        <taxon>Embryophyta</taxon>
        <taxon>Tracheophyta</taxon>
        <taxon>Spermatophyta</taxon>
        <taxon>Magnoliopsida</taxon>
        <taxon>eudicotyledons</taxon>
        <taxon>Gunneridae</taxon>
        <taxon>Pentapetalae</taxon>
        <taxon>rosids</taxon>
        <taxon>malvids</taxon>
        <taxon>Brassicales</taxon>
        <taxon>Brassicaceae</taxon>
        <taxon>Camelineae</taxon>
        <taxon>Arabidopsis</taxon>
    </lineage>
</organism>
<sequence>MQGRVRGSGEDRISILPEPLLCHILSFLRTKDSVRTSVLSSRWRDLWLWVPRLDLDKSDFSDDNPSASFVDKFLNFRGESYLRGFKLNTDHDVYDISTLDACLMRLDKCKIQHFEIENCFGFCILLMPLIIPMCHTLVSLKLSFVILSKFGSLSLPCLEIMHFEKVIFPSDKSAEVLIACSPVLRDLRISQSGDDAVEVLRVCSASLKSFTLKRTDHDYVGNGEYTVVIDTPRLEYLNLKDYQCQGFKIVSMSEYVRVHVDVVFEVIGGTVLSKRNIICDFLSCVSNVRYMTISRRSLEFIYRHLELKPRFKFHDLARLRATMFSNSSPEMLPVILETCPNLKHLTLELVHDSLVTEGTSGLLTVLPRCLISSLASVDIESPITDKATELKLVSYLLENSTTLKKLVLRLNQSCRDKYEPGLLKQVLQSPRCSSLCQLVIL</sequence>
<reference key="1">
    <citation type="journal article" date="2000" name="Nature">
        <title>Sequence and analysis of chromosome 5 of the plant Arabidopsis thaliana.</title>
        <authorList>
            <person name="Tabata S."/>
            <person name="Kaneko T."/>
            <person name="Nakamura Y."/>
            <person name="Kotani H."/>
            <person name="Kato T."/>
            <person name="Asamizu E."/>
            <person name="Miyajima N."/>
            <person name="Sasamoto S."/>
            <person name="Kimura T."/>
            <person name="Hosouchi T."/>
            <person name="Kawashima K."/>
            <person name="Kohara M."/>
            <person name="Matsumoto M."/>
            <person name="Matsuno A."/>
            <person name="Muraki A."/>
            <person name="Nakayama S."/>
            <person name="Nakazaki N."/>
            <person name="Naruo K."/>
            <person name="Okumura S."/>
            <person name="Shinpo S."/>
            <person name="Takeuchi C."/>
            <person name="Wada T."/>
            <person name="Watanabe A."/>
            <person name="Yamada M."/>
            <person name="Yasuda M."/>
            <person name="Sato S."/>
            <person name="de la Bastide M."/>
            <person name="Huang E."/>
            <person name="Spiegel L."/>
            <person name="Gnoj L."/>
            <person name="O'Shaughnessy A."/>
            <person name="Preston R."/>
            <person name="Habermann K."/>
            <person name="Murray J."/>
            <person name="Johnson D."/>
            <person name="Rohlfing T."/>
            <person name="Nelson J."/>
            <person name="Stoneking T."/>
            <person name="Pepin K."/>
            <person name="Spieth J."/>
            <person name="Sekhon M."/>
            <person name="Armstrong J."/>
            <person name="Becker M."/>
            <person name="Belter E."/>
            <person name="Cordum H."/>
            <person name="Cordes M."/>
            <person name="Courtney L."/>
            <person name="Courtney W."/>
            <person name="Dante M."/>
            <person name="Du H."/>
            <person name="Edwards J."/>
            <person name="Fryman J."/>
            <person name="Haakensen B."/>
            <person name="Lamar E."/>
            <person name="Latreille P."/>
            <person name="Leonard S."/>
            <person name="Meyer R."/>
            <person name="Mulvaney E."/>
            <person name="Ozersky P."/>
            <person name="Riley A."/>
            <person name="Strowmatt C."/>
            <person name="Wagner-McPherson C."/>
            <person name="Wollam A."/>
            <person name="Yoakum M."/>
            <person name="Bell M."/>
            <person name="Dedhia N."/>
            <person name="Parnell L."/>
            <person name="Shah R."/>
            <person name="Rodriguez M."/>
            <person name="Hoon See L."/>
            <person name="Vil D."/>
            <person name="Baker J."/>
            <person name="Kirchoff K."/>
            <person name="Toth K."/>
            <person name="King L."/>
            <person name="Bahret A."/>
            <person name="Miller B."/>
            <person name="Marra M.A."/>
            <person name="Martienssen R."/>
            <person name="McCombie W.R."/>
            <person name="Wilson R.K."/>
            <person name="Murphy G."/>
            <person name="Bancroft I."/>
            <person name="Volckaert G."/>
            <person name="Wambutt R."/>
            <person name="Duesterhoeft A."/>
            <person name="Stiekema W."/>
            <person name="Pohl T."/>
            <person name="Entian K.-D."/>
            <person name="Terryn N."/>
            <person name="Hartley N."/>
            <person name="Bent E."/>
            <person name="Johnson S."/>
            <person name="Langham S.-A."/>
            <person name="McCullagh B."/>
            <person name="Robben J."/>
            <person name="Grymonprez B."/>
            <person name="Zimmermann W."/>
            <person name="Ramsperger U."/>
            <person name="Wedler H."/>
            <person name="Balke K."/>
            <person name="Wedler E."/>
            <person name="Peters S."/>
            <person name="van Staveren M."/>
            <person name="Dirkse W."/>
            <person name="Mooijman P."/>
            <person name="Klein Lankhorst R."/>
            <person name="Weitzenegger T."/>
            <person name="Bothe G."/>
            <person name="Rose M."/>
            <person name="Hauf J."/>
            <person name="Berneiser S."/>
            <person name="Hempel S."/>
            <person name="Feldpausch M."/>
            <person name="Lamberth S."/>
            <person name="Villarroel R."/>
            <person name="Gielen J."/>
            <person name="Ardiles W."/>
            <person name="Bents O."/>
            <person name="Lemcke K."/>
            <person name="Kolesov G."/>
            <person name="Mayer K.F.X."/>
            <person name="Rudd S."/>
            <person name="Schoof H."/>
            <person name="Schueller C."/>
            <person name="Zaccaria P."/>
            <person name="Mewes H.-W."/>
            <person name="Bevan M."/>
            <person name="Fransz P.F."/>
        </authorList>
    </citation>
    <scope>NUCLEOTIDE SEQUENCE [LARGE SCALE GENOMIC DNA]</scope>
    <source>
        <strain>cv. Columbia</strain>
    </source>
</reference>
<reference key="2">
    <citation type="journal article" date="2017" name="Plant J.">
        <title>Araport11: a complete reannotation of the Arabidopsis thaliana reference genome.</title>
        <authorList>
            <person name="Cheng C.Y."/>
            <person name="Krishnakumar V."/>
            <person name="Chan A.P."/>
            <person name="Thibaud-Nissen F."/>
            <person name="Schobel S."/>
            <person name="Town C.D."/>
        </authorList>
    </citation>
    <scope>GENOME REANNOTATION</scope>
    <source>
        <strain>cv. Columbia</strain>
    </source>
</reference>
<reference key="3">
    <citation type="submission" date="2006-07" db="EMBL/GenBank/DDBJ databases">
        <title>Large-scale analysis of RIKEN Arabidopsis full-length (RAFL) cDNAs.</title>
        <authorList>
            <person name="Totoki Y."/>
            <person name="Seki M."/>
            <person name="Ishida J."/>
            <person name="Nakajima M."/>
            <person name="Enju A."/>
            <person name="Kamiya A."/>
            <person name="Narusaka M."/>
            <person name="Shin-i T."/>
            <person name="Nakagawa M."/>
            <person name="Sakamoto N."/>
            <person name="Oishi K."/>
            <person name="Kohara Y."/>
            <person name="Kobayashi M."/>
            <person name="Toyoda A."/>
            <person name="Sakaki Y."/>
            <person name="Sakurai T."/>
            <person name="Iida K."/>
            <person name="Akiyama K."/>
            <person name="Satou M."/>
            <person name="Toyoda T."/>
            <person name="Konagaya A."/>
            <person name="Carninci P."/>
            <person name="Kawai J."/>
            <person name="Hayashizaki Y."/>
            <person name="Shinozaki K."/>
        </authorList>
    </citation>
    <scope>NUCLEOTIDE SEQUENCE [LARGE SCALE MRNA] (ISOFORM 2)</scope>
    <source>
        <strain>cv. Columbia</strain>
    </source>
</reference>
<feature type="chain" id="PRO_0000283528" description="FBD-associated F-box protein At5g18780">
    <location>
        <begin position="1"/>
        <end position="441"/>
    </location>
</feature>
<feature type="domain" description="F-box" evidence="1">
    <location>
        <begin position="10"/>
        <end position="56"/>
    </location>
</feature>
<feature type="domain" description="FBD">
    <location>
        <begin position="366"/>
        <end position="410"/>
    </location>
</feature>
<feature type="splice variant" id="VSP_042041" description="In isoform 2." evidence="2">
    <original>FIYRHLELK</original>
    <variation>VYILSTNTH</variation>
    <location>
        <begin position="300"/>
        <end position="308"/>
    </location>
</feature>
<feature type="splice variant" id="VSP_042042" description="In isoform 2." evidence="2">
    <location>
        <begin position="309"/>
        <end position="441"/>
    </location>
</feature>
<proteinExistence type="evidence at transcript level"/>
<accession>Q56YH2</accession>
<accession>F4JY47</accession>
<protein>
    <recommendedName>
        <fullName>FBD-associated F-box protein At5g18780</fullName>
    </recommendedName>
</protein>
<dbReference type="EMBL" id="AC068655">
    <property type="status" value="NOT_ANNOTATED_CDS"/>
    <property type="molecule type" value="Genomic_DNA"/>
</dbReference>
<dbReference type="EMBL" id="CP002688">
    <property type="protein sequence ID" value="AED92610.1"/>
    <property type="molecule type" value="Genomic_DNA"/>
</dbReference>
<dbReference type="EMBL" id="CP002688">
    <property type="protein sequence ID" value="AED92611.1"/>
    <property type="molecule type" value="Genomic_DNA"/>
</dbReference>
<dbReference type="EMBL" id="AK221350">
    <property type="protein sequence ID" value="BAD94200.1"/>
    <property type="molecule type" value="mRNA"/>
</dbReference>
<dbReference type="EMBL" id="AK230408">
    <property type="protein sequence ID" value="BAF02206.1"/>
    <property type="molecule type" value="mRNA"/>
</dbReference>
<dbReference type="RefSeq" id="NP_001190332.1">
    <molecule id="Q56YH2-1"/>
    <property type="nucleotide sequence ID" value="NM_001203403.2"/>
</dbReference>
<dbReference type="RefSeq" id="NP_197379.1">
    <molecule id="Q56YH2-1"/>
    <property type="nucleotide sequence ID" value="NM_121883.3"/>
</dbReference>
<dbReference type="FunCoup" id="Q56YH2">
    <property type="interactions" value="49"/>
</dbReference>
<dbReference type="STRING" id="3702.Q56YH2"/>
<dbReference type="iPTMnet" id="Q56YH2"/>
<dbReference type="PaxDb" id="3702-AT5G18780.1"/>
<dbReference type="EnsemblPlants" id="AT5G18780.1">
    <molecule id="Q56YH2-1"/>
    <property type="protein sequence ID" value="AT5G18780.1"/>
    <property type="gene ID" value="AT5G18780"/>
</dbReference>
<dbReference type="EnsemblPlants" id="AT5G18780.2">
    <molecule id="Q56YH2-1"/>
    <property type="protein sequence ID" value="AT5G18780.2"/>
    <property type="gene ID" value="AT5G18780"/>
</dbReference>
<dbReference type="GeneID" id="831996"/>
<dbReference type="Gramene" id="AT5G18780.1">
    <molecule id="Q56YH2-1"/>
    <property type="protein sequence ID" value="AT5G18780.1"/>
    <property type="gene ID" value="AT5G18780"/>
</dbReference>
<dbReference type="Gramene" id="AT5G18780.2">
    <molecule id="Q56YH2-1"/>
    <property type="protein sequence ID" value="AT5G18780.2"/>
    <property type="gene ID" value="AT5G18780"/>
</dbReference>
<dbReference type="KEGG" id="ath:AT5G18780"/>
<dbReference type="Araport" id="AT5G18780"/>
<dbReference type="TAIR" id="AT5G18780"/>
<dbReference type="HOGENOM" id="CLU_010721_1_3_1"/>
<dbReference type="InParanoid" id="Q56YH2"/>
<dbReference type="OMA" id="SLCQLVI"/>
<dbReference type="OrthoDB" id="612216at2759"/>
<dbReference type="PRO" id="PR:Q56YH2"/>
<dbReference type="Proteomes" id="UP000006548">
    <property type="component" value="Chromosome 5"/>
</dbReference>
<dbReference type="ExpressionAtlas" id="Q56YH2">
    <property type="expression patterns" value="baseline and differential"/>
</dbReference>
<dbReference type="CDD" id="cd22160">
    <property type="entry name" value="F-box_AtFBL13-like"/>
    <property type="match status" value="1"/>
</dbReference>
<dbReference type="Gene3D" id="1.20.1280.50">
    <property type="match status" value="1"/>
</dbReference>
<dbReference type="Gene3D" id="3.80.10.10">
    <property type="entry name" value="Ribonuclease Inhibitor"/>
    <property type="match status" value="1"/>
</dbReference>
<dbReference type="InterPro" id="IPR036047">
    <property type="entry name" value="F-box-like_dom_sf"/>
</dbReference>
<dbReference type="InterPro" id="IPR053781">
    <property type="entry name" value="F-box_AtFBL13-like"/>
</dbReference>
<dbReference type="InterPro" id="IPR001810">
    <property type="entry name" value="F-box_dom"/>
</dbReference>
<dbReference type="InterPro" id="IPR006566">
    <property type="entry name" value="FBD"/>
</dbReference>
<dbReference type="InterPro" id="IPR050232">
    <property type="entry name" value="FBL13/AtMIF1-like"/>
</dbReference>
<dbReference type="InterPro" id="IPR032675">
    <property type="entry name" value="LRR_dom_sf"/>
</dbReference>
<dbReference type="PANTHER" id="PTHR31900">
    <property type="entry name" value="F-BOX/RNI SUPERFAMILY PROTEIN-RELATED"/>
    <property type="match status" value="1"/>
</dbReference>
<dbReference type="PANTHER" id="PTHR31900:SF33">
    <property type="entry name" value="PROTEIN WITH RNI-LIKE_FBD-LIKE DOMAIN"/>
    <property type="match status" value="1"/>
</dbReference>
<dbReference type="Pfam" id="PF00646">
    <property type="entry name" value="F-box"/>
    <property type="match status" value="1"/>
</dbReference>
<dbReference type="Pfam" id="PF08387">
    <property type="entry name" value="FBD"/>
    <property type="match status" value="1"/>
</dbReference>
<dbReference type="SMART" id="SM00579">
    <property type="entry name" value="FBD"/>
    <property type="match status" value="1"/>
</dbReference>
<dbReference type="SUPFAM" id="SSF81383">
    <property type="entry name" value="F-box domain"/>
    <property type="match status" value="1"/>
</dbReference>
<dbReference type="SUPFAM" id="SSF52047">
    <property type="entry name" value="RNI-like"/>
    <property type="match status" value="1"/>
</dbReference>
<dbReference type="PROSITE" id="PS50181">
    <property type="entry name" value="FBOX"/>
    <property type="match status" value="1"/>
</dbReference>
<gene>
    <name type="ordered locus">At5g18780</name>
    <name type="ORF">F17K4.30</name>
</gene>
<name>FBD41_ARATH</name>
<evidence type="ECO:0000255" key="1">
    <source>
        <dbReference type="PROSITE-ProRule" id="PRU00080"/>
    </source>
</evidence>
<evidence type="ECO:0000303" key="2">
    <source ref="3"/>
</evidence>
<comment type="alternative products">
    <event type="alternative splicing"/>
    <isoform>
        <id>Q56YH2-1</id>
        <name>1</name>
        <sequence type="displayed"/>
    </isoform>
    <isoform>
        <id>Q56YH2-2</id>
        <name>2</name>
        <sequence type="described" ref="VSP_042041 VSP_042042"/>
    </isoform>
</comment>
<keyword id="KW-0025">Alternative splicing</keyword>
<keyword id="KW-1185">Reference proteome</keyword>